<feature type="chain" id="PRO_0000196509" description="Trp operon repressor homolog">
    <location>
        <begin position="1"/>
        <end position="101"/>
    </location>
</feature>
<feature type="DNA-binding region" evidence="1">
    <location>
        <begin position="59"/>
        <end position="82"/>
    </location>
</feature>
<comment type="function">
    <text evidence="1">This protein is an aporepressor. When complexed with L-tryptophan it binds the operator region of the trp operon and prevents the initiation of transcription (By similarity).</text>
</comment>
<comment type="subunit">
    <text evidence="1">Homodimer.</text>
</comment>
<comment type="subcellular location">
    <subcellularLocation>
        <location evidence="1">Cytoplasm</location>
    </subcellularLocation>
</comment>
<comment type="similarity">
    <text evidence="2">Belongs to the TrpR family.</text>
</comment>
<protein>
    <recommendedName>
        <fullName>Trp operon repressor homolog</fullName>
    </recommendedName>
</protein>
<sequence length="101" mass="11872">MYISRNLEQWNAFLQMLKIAFEENKAQEFLTLLLTADERDAVGLRLQIVSQLIDKNMPQREIQQNLNTSAATITRGSNMIKTMDPDFMQWMKQHLDLIEKN</sequence>
<keyword id="KW-0963">Cytoplasm</keyword>
<keyword id="KW-0238">DNA-binding</keyword>
<keyword id="KW-1185">Reference proteome</keyword>
<keyword id="KW-0678">Repressor</keyword>
<keyword id="KW-0804">Transcription</keyword>
<keyword id="KW-0805">Transcription regulation</keyword>
<proteinExistence type="inferred from homology"/>
<name>TRPR_HAEIN</name>
<gene>
    <name type="primary">trpR</name>
    <name type="ordered locus">HI_0830</name>
</gene>
<organism>
    <name type="scientific">Haemophilus influenzae (strain ATCC 51907 / DSM 11121 / KW20 / Rd)</name>
    <dbReference type="NCBI Taxonomy" id="71421"/>
    <lineage>
        <taxon>Bacteria</taxon>
        <taxon>Pseudomonadati</taxon>
        <taxon>Pseudomonadota</taxon>
        <taxon>Gammaproteobacteria</taxon>
        <taxon>Pasteurellales</taxon>
        <taxon>Pasteurellaceae</taxon>
        <taxon>Haemophilus</taxon>
    </lineage>
</organism>
<accession>P44889</accession>
<dbReference type="EMBL" id="L42023">
    <property type="protein sequence ID" value="AAC22488.1"/>
    <property type="molecule type" value="Genomic_DNA"/>
</dbReference>
<dbReference type="PIR" id="D64097">
    <property type="entry name" value="D64097"/>
</dbReference>
<dbReference type="RefSeq" id="NP_438990.1">
    <property type="nucleotide sequence ID" value="NC_000907.1"/>
</dbReference>
<dbReference type="SMR" id="P44889"/>
<dbReference type="STRING" id="71421.HI_0830"/>
<dbReference type="EnsemblBacteria" id="AAC22488">
    <property type="protein sequence ID" value="AAC22488"/>
    <property type="gene ID" value="HI_0830"/>
</dbReference>
<dbReference type="KEGG" id="hin:HI_0830"/>
<dbReference type="PATRIC" id="fig|71421.8.peg.871"/>
<dbReference type="eggNOG" id="COG2973">
    <property type="taxonomic scope" value="Bacteria"/>
</dbReference>
<dbReference type="HOGENOM" id="CLU_147939_0_0_6"/>
<dbReference type="OrthoDB" id="5704033at2"/>
<dbReference type="PhylomeDB" id="P44889"/>
<dbReference type="BioCyc" id="HINF71421:G1GJ1-871-MONOMER"/>
<dbReference type="Proteomes" id="UP000000579">
    <property type="component" value="Chromosome"/>
</dbReference>
<dbReference type="GO" id="GO:0005737">
    <property type="term" value="C:cytoplasm"/>
    <property type="evidence" value="ECO:0007669"/>
    <property type="project" value="UniProtKB-SubCell"/>
</dbReference>
<dbReference type="GO" id="GO:0003700">
    <property type="term" value="F:DNA-binding transcription factor activity"/>
    <property type="evidence" value="ECO:0007669"/>
    <property type="project" value="InterPro"/>
</dbReference>
<dbReference type="GO" id="GO:0043565">
    <property type="term" value="F:sequence-specific DNA binding"/>
    <property type="evidence" value="ECO:0000318"/>
    <property type="project" value="GO_Central"/>
</dbReference>
<dbReference type="GO" id="GO:0045892">
    <property type="term" value="P:negative regulation of DNA-templated transcription"/>
    <property type="evidence" value="ECO:0007669"/>
    <property type="project" value="UniProtKB-UniRule"/>
</dbReference>
<dbReference type="GO" id="GO:0006355">
    <property type="term" value="P:regulation of DNA-templated transcription"/>
    <property type="evidence" value="ECO:0000318"/>
    <property type="project" value="GO_Central"/>
</dbReference>
<dbReference type="Gene3D" id="1.10.1270.10">
    <property type="entry name" value="TrpR-like"/>
    <property type="match status" value="1"/>
</dbReference>
<dbReference type="HAMAP" id="MF_00475">
    <property type="entry name" value="Trp_repressor"/>
    <property type="match status" value="1"/>
</dbReference>
<dbReference type="InterPro" id="IPR000831">
    <property type="entry name" value="Trp_repress"/>
</dbReference>
<dbReference type="InterPro" id="IPR013335">
    <property type="entry name" value="Trp_repress_bac"/>
</dbReference>
<dbReference type="InterPro" id="IPR010921">
    <property type="entry name" value="Trp_repressor/repl_initiator"/>
</dbReference>
<dbReference type="InterPro" id="IPR038116">
    <property type="entry name" value="TrpR-like_sf"/>
</dbReference>
<dbReference type="NCBIfam" id="TIGR01321">
    <property type="entry name" value="TrpR"/>
    <property type="match status" value="1"/>
</dbReference>
<dbReference type="PANTHER" id="PTHR38025">
    <property type="entry name" value="TRP OPERON REPRESSOR"/>
    <property type="match status" value="1"/>
</dbReference>
<dbReference type="PANTHER" id="PTHR38025:SF1">
    <property type="entry name" value="TRP OPERON REPRESSOR"/>
    <property type="match status" value="1"/>
</dbReference>
<dbReference type="Pfam" id="PF01371">
    <property type="entry name" value="Trp_repressor"/>
    <property type="match status" value="1"/>
</dbReference>
<dbReference type="PIRSF" id="PIRSF003196">
    <property type="entry name" value="Trp_repressor"/>
    <property type="match status" value="1"/>
</dbReference>
<dbReference type="SUPFAM" id="SSF48295">
    <property type="entry name" value="TrpR-like"/>
    <property type="match status" value="1"/>
</dbReference>
<evidence type="ECO:0000250" key="1"/>
<evidence type="ECO:0000305" key="2"/>
<reference key="1">
    <citation type="journal article" date="1995" name="Science">
        <title>Whole-genome random sequencing and assembly of Haemophilus influenzae Rd.</title>
        <authorList>
            <person name="Fleischmann R.D."/>
            <person name="Adams M.D."/>
            <person name="White O."/>
            <person name="Clayton R.A."/>
            <person name="Kirkness E.F."/>
            <person name="Kerlavage A.R."/>
            <person name="Bult C.J."/>
            <person name="Tomb J.-F."/>
            <person name="Dougherty B.A."/>
            <person name="Merrick J.M."/>
            <person name="McKenney K."/>
            <person name="Sutton G.G."/>
            <person name="FitzHugh W."/>
            <person name="Fields C.A."/>
            <person name="Gocayne J.D."/>
            <person name="Scott J.D."/>
            <person name="Shirley R."/>
            <person name="Liu L.-I."/>
            <person name="Glodek A."/>
            <person name="Kelley J.M."/>
            <person name="Weidman J.F."/>
            <person name="Phillips C.A."/>
            <person name="Spriggs T."/>
            <person name="Hedblom E."/>
            <person name="Cotton M.D."/>
            <person name="Utterback T.R."/>
            <person name="Hanna M.C."/>
            <person name="Nguyen D.T."/>
            <person name="Saudek D.M."/>
            <person name="Brandon R.C."/>
            <person name="Fine L.D."/>
            <person name="Fritchman J.L."/>
            <person name="Fuhrmann J.L."/>
            <person name="Geoghagen N.S.M."/>
            <person name="Gnehm C.L."/>
            <person name="McDonald L.A."/>
            <person name="Small K.V."/>
            <person name="Fraser C.M."/>
            <person name="Smith H.O."/>
            <person name="Venter J.C."/>
        </authorList>
    </citation>
    <scope>NUCLEOTIDE SEQUENCE [LARGE SCALE GENOMIC DNA]</scope>
    <source>
        <strain>ATCC 51907 / DSM 11121 / KW20 / Rd</strain>
    </source>
</reference>